<reference key="1">
    <citation type="journal article" date="1999" name="Nature">
        <title>Single gene circles in dinoflagellate chloroplast genomes.</title>
        <authorList>
            <person name="Zhang Z."/>
            <person name="Green B.R."/>
            <person name="Cavalier-Smith T."/>
        </authorList>
    </citation>
    <scope>NUCLEOTIDE SEQUENCE [GENOMIC DNA]</scope>
    <source>
        <strain>CCMP449</strain>
    </source>
</reference>
<organism>
    <name type="scientific">Heterocapsa triquetra</name>
    <name type="common">Dinoflagellate</name>
    <name type="synonym">Glenodinium triquetrum</name>
    <dbReference type="NCBI Taxonomy" id="66468"/>
    <lineage>
        <taxon>Eukaryota</taxon>
        <taxon>Sar</taxon>
        <taxon>Alveolata</taxon>
        <taxon>Dinophyceae</taxon>
        <taxon>Peridiniales</taxon>
        <taxon>Heterocapsaceae</taxon>
        <taxon>Heterocapsa</taxon>
    </lineage>
</organism>
<comment type="function">
    <text>PsaA and PsaB bind P700, the primary electron donor of photosystem I (PSI), as well as the electron acceptors A0, A1 and FX. PSI is a plastocyanin/cytochrome c6-ferredoxin oxidoreductase, converting photonic excitation into a charge separation, which transfers an electron from the donor P700 chlorophyll pair to the spectroscopically characterized acceptors A0, A1, FX, FA and FB in turn. Oxidized P700 is reduced on the lumenal side of the thylakoid membrane by plastocyanin or cytochrome c6.</text>
</comment>
<comment type="catalytic activity">
    <reaction evidence="1">
        <text>reduced [plastocyanin] + hnu + oxidized [2Fe-2S]-[ferredoxin] = oxidized [plastocyanin] + reduced [2Fe-2S]-[ferredoxin]</text>
        <dbReference type="Rhea" id="RHEA:30407"/>
        <dbReference type="Rhea" id="RHEA-COMP:10000"/>
        <dbReference type="Rhea" id="RHEA-COMP:10001"/>
        <dbReference type="Rhea" id="RHEA-COMP:10039"/>
        <dbReference type="Rhea" id="RHEA-COMP:10040"/>
        <dbReference type="ChEBI" id="CHEBI:29036"/>
        <dbReference type="ChEBI" id="CHEBI:30212"/>
        <dbReference type="ChEBI" id="CHEBI:33737"/>
        <dbReference type="ChEBI" id="CHEBI:33738"/>
        <dbReference type="ChEBI" id="CHEBI:49552"/>
        <dbReference type="EC" id="1.97.1.12"/>
    </reaction>
</comment>
<comment type="cofactor">
    <text evidence="1">P700 is a chlorophyll a/chlorophyll a' dimer, A0 is one or more chlorophyll a, A1 is one or both phylloquinones and FX is a shared 4Fe-4S iron-sulfur center.</text>
</comment>
<comment type="subunit">
    <text evidence="1">The PsaA/B heterodimer binds the P700 chlorophyll special pair and subsequent electron acceptors. PSI consists of a core antenna complex that captures photons, and an electron transfer chain that converts photonic excitation into a charge separation. The eukaryotic PSI reaction center is composed of at least 11 subunits.</text>
</comment>
<comment type="subcellular location">
    <subcellularLocation>
        <location evidence="1">Plastid</location>
        <location evidence="1">Chloroplast thylakoid membrane</location>
        <topology evidence="1">Multi-pass membrane protein</topology>
    </subcellularLocation>
</comment>
<comment type="similarity">
    <text evidence="1">Belongs to the PsaA/PsaB family.</text>
</comment>
<dbReference type="EC" id="1.97.1.12" evidence="1"/>
<dbReference type="EMBL" id="AF130031">
    <property type="protein sequence ID" value="AAD44698.1"/>
    <property type="molecule type" value="Genomic_DNA"/>
</dbReference>
<dbReference type="SMR" id="Q9XQV3"/>
<dbReference type="GO" id="GO:0009535">
    <property type="term" value="C:chloroplast thylakoid membrane"/>
    <property type="evidence" value="ECO:0007669"/>
    <property type="project" value="UniProtKB-SubCell"/>
</dbReference>
<dbReference type="GO" id="GO:0009522">
    <property type="term" value="C:photosystem I"/>
    <property type="evidence" value="ECO:0007669"/>
    <property type="project" value="UniProtKB-KW"/>
</dbReference>
<dbReference type="GO" id="GO:0051539">
    <property type="term" value="F:4 iron, 4 sulfur cluster binding"/>
    <property type="evidence" value="ECO:0007669"/>
    <property type="project" value="UniProtKB-KW"/>
</dbReference>
<dbReference type="GO" id="GO:0016168">
    <property type="term" value="F:chlorophyll binding"/>
    <property type="evidence" value="ECO:0007669"/>
    <property type="project" value="UniProtKB-KW"/>
</dbReference>
<dbReference type="GO" id="GO:0009055">
    <property type="term" value="F:electron transfer activity"/>
    <property type="evidence" value="ECO:0007669"/>
    <property type="project" value="UniProtKB-UniRule"/>
</dbReference>
<dbReference type="GO" id="GO:0000287">
    <property type="term" value="F:magnesium ion binding"/>
    <property type="evidence" value="ECO:0007669"/>
    <property type="project" value="UniProtKB-UniRule"/>
</dbReference>
<dbReference type="GO" id="GO:0016491">
    <property type="term" value="F:oxidoreductase activity"/>
    <property type="evidence" value="ECO:0007669"/>
    <property type="project" value="UniProtKB-KW"/>
</dbReference>
<dbReference type="GO" id="GO:0015979">
    <property type="term" value="P:photosynthesis"/>
    <property type="evidence" value="ECO:0007669"/>
    <property type="project" value="UniProtKB-UniRule"/>
</dbReference>
<dbReference type="Gene3D" id="1.20.1130.10">
    <property type="entry name" value="Photosystem I PsaA/PsaB"/>
    <property type="match status" value="1"/>
</dbReference>
<dbReference type="HAMAP" id="MF_00458">
    <property type="entry name" value="PSI_PsaA"/>
    <property type="match status" value="1"/>
</dbReference>
<dbReference type="InterPro" id="IPR006243">
    <property type="entry name" value="PSI_PsaA"/>
</dbReference>
<dbReference type="InterPro" id="IPR001280">
    <property type="entry name" value="PSI_PsaA/B"/>
</dbReference>
<dbReference type="InterPro" id="IPR020586">
    <property type="entry name" value="PSI_PsaA/B_CS"/>
</dbReference>
<dbReference type="InterPro" id="IPR036408">
    <property type="entry name" value="PSI_PsaA/B_sf"/>
</dbReference>
<dbReference type="NCBIfam" id="TIGR01335">
    <property type="entry name" value="psaA"/>
    <property type="match status" value="1"/>
</dbReference>
<dbReference type="PANTHER" id="PTHR30128">
    <property type="entry name" value="OUTER MEMBRANE PROTEIN, OMPA-RELATED"/>
    <property type="match status" value="1"/>
</dbReference>
<dbReference type="PANTHER" id="PTHR30128:SF19">
    <property type="entry name" value="PHOTOSYSTEM I P700 CHLOROPHYLL A APOPROTEIN A1-RELATED"/>
    <property type="match status" value="1"/>
</dbReference>
<dbReference type="Pfam" id="PF00223">
    <property type="entry name" value="PsaA_PsaB"/>
    <property type="match status" value="1"/>
</dbReference>
<dbReference type="PIRSF" id="PIRSF002905">
    <property type="entry name" value="PSI_A"/>
    <property type="match status" value="1"/>
</dbReference>
<dbReference type="PRINTS" id="PR00257">
    <property type="entry name" value="PHOTSYSPSAAB"/>
</dbReference>
<dbReference type="SUPFAM" id="SSF81558">
    <property type="entry name" value="Photosystem I subunits PsaA/PsaB"/>
    <property type="match status" value="1"/>
</dbReference>
<dbReference type="PROSITE" id="PS00419">
    <property type="entry name" value="PHOTOSYSTEM_I_PSAAB"/>
    <property type="match status" value="1"/>
</dbReference>
<evidence type="ECO:0000255" key="1">
    <source>
        <dbReference type="HAMAP-Rule" id="MF_00458"/>
    </source>
</evidence>
<sequence length="732" mass="80332">MKLFFRYVNSRVWSQAGSSHFNKALAKGPKTTTWIWSLHADAHDFQQSSSESTAASVGAKVFSSGLAHFSIVFFWLGGMHFHGAYFSNYSAWLKDPKTPGSQLVWSLVGQDILNQDLGGYFQSIRVTSGFFQLWRAEGIVTQVHLKYAAAAALIGSIATLWAAYFHMHISWSSSLRTMGSLSSYNAGQLAILAGLGSISWAGHQIHIALPINRLLDSGVDPSQLPSPQDLLFKDLMQVIFPGFGVGPAVDFSIYLNQKGAASEVGLNPSTGSIYLGQIASHHFFVGITCIISGIIALLVKRSKAGSFQDAAAFNNSWHSRLSINLAIAGSLSITFAHHIYAMPVYPFCGSDYATVLSLFVHHMWIGGFFIVGAGAHASIFMIRDEGVPAGIPSAKGRLYSVNSIIQQLLAHRDIIMGHLIYVTIALGMHAFGIYIHNDTLQALGRPEDIFSDNSIQLKPLFAVWVQSLPSLFLLNTLSGDAAVTGIPGFGLEVLDGKVVTMTQELGTADFMVHHIHAFTIHCTLLILMKGVLYSRSSRLVSDKLELGFRYPCDGPGRGGTCQISPWDHVFLGVFWMYNSLSIVIFHFFWKMQSDVWGVYDVSTQKIVHLTGGDFSVNSITINGWLRNFLWSQAAEVIQSYGSGLSGYGLIFLGAHFTWAFSLMFLWSGRGYWQELIESILWAHHKLKIVPNIQPRALSITQGRAVGLVHYMLGGIGTTWAFFLARVVALSIS</sequence>
<proteinExistence type="inferred from homology"/>
<feature type="chain" id="PRO_0000088553" description="Photosystem I P700 chlorophyll a apoprotein A1">
    <location>
        <begin position="1"/>
        <end position="732"/>
    </location>
</feature>
<feature type="transmembrane region" description="Helical; Name=I" evidence="1">
    <location>
        <begin position="61"/>
        <end position="84"/>
    </location>
</feature>
<feature type="transmembrane region" description="Helical; Name=II" evidence="1">
    <location>
        <begin position="145"/>
        <end position="168"/>
    </location>
</feature>
<feature type="transmembrane region" description="Helical; Name=III" evidence="1">
    <location>
        <begin position="185"/>
        <end position="209"/>
    </location>
</feature>
<feature type="transmembrane region" description="Helical; Name=IV" evidence="1">
    <location>
        <begin position="278"/>
        <end position="296"/>
    </location>
</feature>
<feature type="transmembrane region" description="Helical; Name=V" evidence="1">
    <location>
        <begin position="317"/>
        <end position="340"/>
    </location>
</feature>
<feature type="transmembrane region" description="Helical; Name=VI" evidence="1">
    <location>
        <begin position="356"/>
        <end position="382"/>
    </location>
</feature>
<feature type="transmembrane region" description="Helical; Name=VII" evidence="1">
    <location>
        <begin position="414"/>
        <end position="436"/>
    </location>
</feature>
<feature type="transmembrane region" description="Helical; Name=VIII" evidence="1">
    <location>
        <begin position="510"/>
        <end position="528"/>
    </location>
</feature>
<feature type="transmembrane region" description="Helical; Name=IX" evidence="1">
    <location>
        <begin position="568"/>
        <end position="589"/>
    </location>
</feature>
<feature type="transmembrane region" description="Helical; Name=X" evidence="1">
    <location>
        <begin position="644"/>
        <end position="666"/>
    </location>
</feature>
<feature type="transmembrane region" description="Helical; Name=XI" evidence="1">
    <location>
        <begin position="704"/>
        <end position="724"/>
    </location>
</feature>
<feature type="binding site" evidence="1">
    <location>
        <position position="552"/>
    </location>
    <ligand>
        <name>[4Fe-4S] cluster</name>
        <dbReference type="ChEBI" id="CHEBI:49883"/>
        <note>ligand shared between dimeric partners</note>
    </ligand>
</feature>
<feature type="binding site" evidence="1">
    <location>
        <position position="561"/>
    </location>
    <ligand>
        <name>[4Fe-4S] cluster</name>
        <dbReference type="ChEBI" id="CHEBI:49883"/>
        <note>ligand shared between dimeric partners</note>
    </ligand>
</feature>
<feature type="binding site" description="axial binding residue" evidence="1">
    <location>
        <position position="655"/>
    </location>
    <ligand>
        <name>chlorophyll a'</name>
        <dbReference type="ChEBI" id="CHEBI:189419"/>
        <label>A1</label>
    </ligand>
    <ligandPart>
        <name>Mg</name>
        <dbReference type="ChEBI" id="CHEBI:25107"/>
    </ligandPart>
</feature>
<feature type="binding site" description="axial binding residue" evidence="1">
    <location>
        <position position="663"/>
    </location>
    <ligand>
        <name>chlorophyll a</name>
        <dbReference type="ChEBI" id="CHEBI:58416"/>
        <label>A3</label>
    </ligand>
    <ligandPart>
        <name>Mg</name>
        <dbReference type="ChEBI" id="CHEBI:25107"/>
    </ligandPart>
</feature>
<feature type="binding site" evidence="1">
    <location>
        <position position="671"/>
    </location>
    <ligand>
        <name>chlorophyll a</name>
        <dbReference type="ChEBI" id="CHEBI:58416"/>
        <label>A3</label>
    </ligand>
</feature>
<feature type="binding site" evidence="1">
    <location>
        <position position="672"/>
    </location>
    <ligand>
        <name>phylloquinone</name>
        <dbReference type="ChEBI" id="CHEBI:18067"/>
        <label>A</label>
    </ligand>
</feature>
<accession>Q9XQV3</accession>
<geneLocation type="chloroplast"/>
<protein>
    <recommendedName>
        <fullName evidence="1">Photosystem I P700 chlorophyll a apoprotein A1</fullName>
        <ecNumber evidence="1">1.97.1.12</ecNumber>
    </recommendedName>
    <alternativeName>
        <fullName evidence="1">PSI-A</fullName>
    </alternativeName>
    <alternativeName>
        <fullName evidence="1">PsaA</fullName>
    </alternativeName>
</protein>
<keyword id="KW-0004">4Fe-4S</keyword>
<keyword id="KW-0148">Chlorophyll</keyword>
<keyword id="KW-0150">Chloroplast</keyword>
<keyword id="KW-0157">Chromophore</keyword>
<keyword id="KW-0249">Electron transport</keyword>
<keyword id="KW-0408">Iron</keyword>
<keyword id="KW-0411">Iron-sulfur</keyword>
<keyword id="KW-0460">Magnesium</keyword>
<keyword id="KW-0472">Membrane</keyword>
<keyword id="KW-0479">Metal-binding</keyword>
<keyword id="KW-0560">Oxidoreductase</keyword>
<keyword id="KW-0602">Photosynthesis</keyword>
<keyword id="KW-0603">Photosystem I</keyword>
<keyword id="KW-0934">Plastid</keyword>
<keyword id="KW-0793">Thylakoid</keyword>
<keyword id="KW-0812">Transmembrane</keyword>
<keyword id="KW-1133">Transmembrane helix</keyword>
<keyword id="KW-0813">Transport</keyword>
<name>PSAA_HETTR</name>
<gene>
    <name evidence="1" type="primary">psaA</name>
</gene>